<feature type="chain" id="PRO_0000359486" description="Alkyl hydroperoxide reductase AhpD">
    <location>
        <begin position="1"/>
        <end position="177"/>
    </location>
</feature>
<feature type="active site" description="Proton donor" evidence="2">
    <location>
        <position position="133"/>
    </location>
</feature>
<feature type="active site" description="Cysteine sulfenic acid (-SOH) intermediate" evidence="2">
    <location>
        <position position="136"/>
    </location>
</feature>
<feature type="disulfide bond" evidence="1">
    <location>
        <begin position="133"/>
        <end position="136"/>
    </location>
</feature>
<feature type="disulfide bond" description="Interchain (with AhpC); in linked form" evidence="2">
    <location>
        <position position="136"/>
    </location>
</feature>
<comment type="function">
    <text evidence="2">Antioxidant protein with alkyl hydroperoxidase activity. Required for the reduction of the AhpC active site cysteine residues and for the regeneration of the AhpC enzyme activity.</text>
</comment>
<comment type="catalytic activity">
    <reaction evidence="2">
        <text>N(6)-[(R)-dihydrolipoyl]-L-lysyl-[lipoyl-carrier protein] + a hydroperoxide = N(6)-[(R)-lipoyl]-L-lysyl-[lipoyl-carrier protein] + an alcohol + H2O</text>
        <dbReference type="Rhea" id="RHEA:62636"/>
        <dbReference type="Rhea" id="RHEA-COMP:10502"/>
        <dbReference type="Rhea" id="RHEA-COMP:16355"/>
        <dbReference type="ChEBI" id="CHEBI:15377"/>
        <dbReference type="ChEBI" id="CHEBI:30879"/>
        <dbReference type="ChEBI" id="CHEBI:35924"/>
        <dbReference type="ChEBI" id="CHEBI:83099"/>
        <dbReference type="ChEBI" id="CHEBI:83100"/>
        <dbReference type="EC" id="1.11.1.28"/>
    </reaction>
</comment>
<comment type="similarity">
    <text evidence="2">Belongs to the AhpD family.</text>
</comment>
<comment type="sequence caution" evidence="3">
    <conflict type="erroneous initiation">
        <sequence resource="EMBL-CDS" id="ABS76918"/>
    </conflict>
    <text>Extended N-terminus.</text>
</comment>
<gene>
    <name evidence="2" type="primary">ahpD</name>
    <name type="ordered locus">CBUD_0522</name>
</gene>
<sequence>MLQTYKDQLPDYAKDLKLNLTQVLSESPSSELSNQQITGVALAVAYATRNRQLIELIFQKAEAELDESTLQAIKAAASIMAMNNIYYRFVHLVKDSEYQRLPANLRMNIIANPGIDKKDFELYSLAVSAINGCGLCIDAHANTLIKAGFSKHSIQHVIRIAAVLNGLAQVSIIENKT</sequence>
<accession>A9KBI4</accession>
<keyword id="KW-0049">Antioxidant</keyword>
<keyword id="KW-1015">Disulfide bond</keyword>
<keyword id="KW-0560">Oxidoreductase</keyword>
<keyword id="KW-0575">Peroxidase</keyword>
<keyword id="KW-0676">Redox-active center</keyword>
<dbReference type="EC" id="1.11.1.28" evidence="2"/>
<dbReference type="EMBL" id="CP000733">
    <property type="protein sequence ID" value="ABS76918.2"/>
    <property type="status" value="ALT_INIT"/>
    <property type="molecule type" value="Genomic_DNA"/>
</dbReference>
<dbReference type="RefSeq" id="WP_012220673.1">
    <property type="nucleotide sequence ID" value="NC_009727.1"/>
</dbReference>
<dbReference type="SMR" id="A9KBI4"/>
<dbReference type="KEGG" id="cbd:CBUD_0522"/>
<dbReference type="HOGENOM" id="CLU_105328_0_0_6"/>
<dbReference type="Proteomes" id="UP000008555">
    <property type="component" value="Chromosome"/>
</dbReference>
<dbReference type="GO" id="GO:0008785">
    <property type="term" value="F:alkyl hydroperoxide reductase activity"/>
    <property type="evidence" value="ECO:0007669"/>
    <property type="project" value="UniProtKB-UniRule"/>
</dbReference>
<dbReference type="GO" id="GO:0015036">
    <property type="term" value="F:disulfide oxidoreductase activity"/>
    <property type="evidence" value="ECO:0007669"/>
    <property type="project" value="TreeGrafter"/>
</dbReference>
<dbReference type="GO" id="GO:0032843">
    <property type="term" value="F:hydroperoxide reductase activity"/>
    <property type="evidence" value="ECO:0007669"/>
    <property type="project" value="InterPro"/>
</dbReference>
<dbReference type="GO" id="GO:0051920">
    <property type="term" value="F:peroxiredoxin activity"/>
    <property type="evidence" value="ECO:0007669"/>
    <property type="project" value="InterPro"/>
</dbReference>
<dbReference type="GO" id="GO:0045454">
    <property type="term" value="P:cell redox homeostasis"/>
    <property type="evidence" value="ECO:0007669"/>
    <property type="project" value="TreeGrafter"/>
</dbReference>
<dbReference type="GO" id="GO:0006979">
    <property type="term" value="P:response to oxidative stress"/>
    <property type="evidence" value="ECO:0007669"/>
    <property type="project" value="InterPro"/>
</dbReference>
<dbReference type="Gene3D" id="1.20.1290.10">
    <property type="entry name" value="AhpD-like"/>
    <property type="match status" value="1"/>
</dbReference>
<dbReference type="HAMAP" id="MF_01676">
    <property type="entry name" value="AhpD"/>
    <property type="match status" value="1"/>
</dbReference>
<dbReference type="InterPro" id="IPR004674">
    <property type="entry name" value="AhpD"/>
</dbReference>
<dbReference type="InterPro" id="IPR029032">
    <property type="entry name" value="AhpD-like"/>
</dbReference>
<dbReference type="InterPro" id="IPR004675">
    <property type="entry name" value="AhpD_core"/>
</dbReference>
<dbReference type="InterPro" id="IPR003779">
    <property type="entry name" value="CMD-like"/>
</dbReference>
<dbReference type="NCBIfam" id="TIGR00778">
    <property type="entry name" value="ahpD_dom"/>
    <property type="match status" value="1"/>
</dbReference>
<dbReference type="PANTHER" id="PTHR33930">
    <property type="entry name" value="ALKYL HYDROPEROXIDE REDUCTASE AHPD"/>
    <property type="match status" value="1"/>
</dbReference>
<dbReference type="PANTHER" id="PTHR33930:SF7">
    <property type="entry name" value="ALKYL HYDROPEROXIDE REDUCTASE AHPD"/>
    <property type="match status" value="1"/>
</dbReference>
<dbReference type="Pfam" id="PF02627">
    <property type="entry name" value="CMD"/>
    <property type="match status" value="1"/>
</dbReference>
<dbReference type="SUPFAM" id="SSF69118">
    <property type="entry name" value="AhpD-like"/>
    <property type="match status" value="1"/>
</dbReference>
<protein>
    <recommendedName>
        <fullName evidence="2">Alkyl hydroperoxide reductase AhpD</fullName>
        <ecNumber evidence="2">1.11.1.28</ecNumber>
    </recommendedName>
    <alternativeName>
        <fullName evidence="2">Alkylhydroperoxidase AhpD</fullName>
    </alternativeName>
</protein>
<proteinExistence type="inferred from homology"/>
<name>AHPD_COXBN</name>
<reference key="1">
    <citation type="journal article" date="2009" name="Infect. Immun.">
        <title>Comparative genomics reveal extensive transposon-mediated genomic plasticity and diversity among potential effector proteins within the genus Coxiella.</title>
        <authorList>
            <person name="Beare P.A."/>
            <person name="Unsworth N."/>
            <person name="Andoh M."/>
            <person name="Voth D.E."/>
            <person name="Omsland A."/>
            <person name="Gilk S.D."/>
            <person name="Williams K.P."/>
            <person name="Sobral B.W."/>
            <person name="Kupko J.J. III"/>
            <person name="Porcella S.F."/>
            <person name="Samuel J.E."/>
            <person name="Heinzen R.A."/>
        </authorList>
    </citation>
    <scope>NUCLEOTIDE SEQUENCE [LARGE SCALE GENOMIC DNA]</scope>
    <source>
        <strain>Dugway 5J108-111</strain>
    </source>
</reference>
<evidence type="ECO:0000250" key="1"/>
<evidence type="ECO:0000255" key="2">
    <source>
        <dbReference type="HAMAP-Rule" id="MF_01676"/>
    </source>
</evidence>
<evidence type="ECO:0000305" key="3"/>
<organism>
    <name type="scientific">Coxiella burnetii (strain Dugway 5J108-111)</name>
    <dbReference type="NCBI Taxonomy" id="434922"/>
    <lineage>
        <taxon>Bacteria</taxon>
        <taxon>Pseudomonadati</taxon>
        <taxon>Pseudomonadota</taxon>
        <taxon>Gammaproteobacteria</taxon>
        <taxon>Legionellales</taxon>
        <taxon>Coxiellaceae</taxon>
        <taxon>Coxiella</taxon>
    </lineage>
</organism>